<feature type="chain" id="PRO_0000409475" description="O-acetyl-ADP-ribose deacetylase">
    <location>
        <begin position="1"/>
        <end position="180"/>
    </location>
</feature>
<feature type="domain" description="Macro" evidence="1">
    <location>
        <begin position="1"/>
        <end position="175"/>
    </location>
</feature>
<feature type="active site" description="Proton acceptor" evidence="1">
    <location>
        <position position="35"/>
    </location>
</feature>
<feature type="binding site" evidence="1">
    <location>
        <begin position="11"/>
        <end position="12"/>
    </location>
    <ligand>
        <name>substrate</name>
    </ligand>
</feature>
<feature type="binding site" evidence="1">
    <location>
        <position position="25"/>
    </location>
    <ligand>
        <name>substrate</name>
    </ligand>
</feature>
<feature type="binding site" evidence="1">
    <location>
        <begin position="33"/>
        <end position="35"/>
    </location>
    <ligand>
        <name>substrate</name>
    </ligand>
</feature>
<feature type="binding site" evidence="1">
    <location>
        <begin position="122"/>
        <end position="126"/>
    </location>
    <ligand>
        <name>substrate</name>
    </ligand>
</feature>
<protein>
    <recommendedName>
        <fullName evidence="1">O-acetyl-ADP-ribose deacetylase</fullName>
        <ecNumber evidence="1">3.1.1.106</ecNumber>
    </recommendedName>
    <alternativeName>
        <fullName evidence="1">Regulator of RNase III activity</fullName>
    </alternativeName>
</protein>
<sequence length="180" mass="19414">MKPQIDVIHGDITTMHVDVIVNAANPSLMGGGGVDGAIHRAAGPQLLEACKTVRQQQGECPPGHAVITLAGDLPAKAVIHAVGPIWHGGDRHEASILEEAYRNCLRLAADNGYKTMAFPAISTGVYGYPKAAAATIAVDTVYRYLSLKPMPEKVTFVCFDEETLHLYQRLLTQRGQELEI</sequence>
<accession>D5CE05</accession>
<gene>
    <name evidence="1" type="primary">ymdB</name>
    <name type="ordered locus">ECL_02595</name>
</gene>
<evidence type="ECO:0000255" key="1">
    <source>
        <dbReference type="HAMAP-Rule" id="MF_01205"/>
    </source>
</evidence>
<keyword id="KW-0378">Hydrolase</keyword>
<keyword id="KW-1185">Reference proteome</keyword>
<name>YMDB_ENTCC</name>
<dbReference type="EC" id="3.1.1.106" evidence="1"/>
<dbReference type="EMBL" id="CP001918">
    <property type="protein sequence ID" value="ADF62138.1"/>
    <property type="molecule type" value="Genomic_DNA"/>
</dbReference>
<dbReference type="RefSeq" id="WP_013097166.1">
    <property type="nucleotide sequence ID" value="NC_014121.1"/>
</dbReference>
<dbReference type="RefSeq" id="YP_003613087.1">
    <property type="nucleotide sequence ID" value="NC_014121.1"/>
</dbReference>
<dbReference type="SMR" id="D5CE05"/>
<dbReference type="STRING" id="716541.ECL_02595"/>
<dbReference type="EnsemblBacteria" id="ADF62138">
    <property type="protein sequence ID" value="ADF62138"/>
    <property type="gene ID" value="ECL_02595"/>
</dbReference>
<dbReference type="KEGG" id="enc:ECL_02595"/>
<dbReference type="PATRIC" id="fig|716541.4.peg.2768"/>
<dbReference type="eggNOG" id="COG2110">
    <property type="taxonomic scope" value="Bacteria"/>
</dbReference>
<dbReference type="HOGENOM" id="CLU_046550_5_1_6"/>
<dbReference type="OrthoDB" id="6194521at2"/>
<dbReference type="Proteomes" id="UP000002363">
    <property type="component" value="Chromosome"/>
</dbReference>
<dbReference type="GO" id="GO:0061463">
    <property type="term" value="F:O-acetyl-ADP-ribose deacetylase activity"/>
    <property type="evidence" value="ECO:0007669"/>
    <property type="project" value="UniProtKB-EC"/>
</dbReference>
<dbReference type="GO" id="GO:0001883">
    <property type="term" value="F:purine nucleoside binding"/>
    <property type="evidence" value="ECO:0007669"/>
    <property type="project" value="UniProtKB-UniRule"/>
</dbReference>
<dbReference type="GO" id="GO:0008428">
    <property type="term" value="F:ribonuclease inhibitor activity"/>
    <property type="evidence" value="ECO:0007669"/>
    <property type="project" value="UniProtKB-UniRule"/>
</dbReference>
<dbReference type="GO" id="GO:0042278">
    <property type="term" value="P:purine nucleoside metabolic process"/>
    <property type="evidence" value="ECO:0007669"/>
    <property type="project" value="UniProtKB-UniRule"/>
</dbReference>
<dbReference type="CDD" id="cd02908">
    <property type="entry name" value="Macro_OAADPr_deacetylase"/>
    <property type="match status" value="1"/>
</dbReference>
<dbReference type="Gene3D" id="3.40.220.10">
    <property type="entry name" value="Leucine Aminopeptidase, subunit E, domain 1"/>
    <property type="match status" value="1"/>
</dbReference>
<dbReference type="HAMAP" id="MF_01205">
    <property type="entry name" value="YmdB"/>
    <property type="match status" value="1"/>
</dbReference>
<dbReference type="InterPro" id="IPR002589">
    <property type="entry name" value="Macro_dom"/>
</dbReference>
<dbReference type="InterPro" id="IPR043472">
    <property type="entry name" value="Macro_dom-like"/>
</dbReference>
<dbReference type="InterPro" id="IPR024900">
    <property type="entry name" value="O-Ac-ADP-ribose_deAcase"/>
</dbReference>
<dbReference type="NCBIfam" id="NF001660">
    <property type="entry name" value="PRK00431.1-1"/>
    <property type="match status" value="1"/>
</dbReference>
<dbReference type="NCBIfam" id="NF001664">
    <property type="entry name" value="PRK00431.1-6"/>
    <property type="match status" value="1"/>
</dbReference>
<dbReference type="PANTHER" id="PTHR11106">
    <property type="entry name" value="GANGLIOSIDE INDUCED DIFFERENTIATION ASSOCIATED PROTEIN 2-RELATED"/>
    <property type="match status" value="1"/>
</dbReference>
<dbReference type="PANTHER" id="PTHR11106:SF27">
    <property type="entry name" value="MACRO DOMAIN-CONTAINING PROTEIN"/>
    <property type="match status" value="1"/>
</dbReference>
<dbReference type="Pfam" id="PF01661">
    <property type="entry name" value="Macro"/>
    <property type="match status" value="1"/>
</dbReference>
<dbReference type="SMART" id="SM00506">
    <property type="entry name" value="A1pp"/>
    <property type="match status" value="1"/>
</dbReference>
<dbReference type="SUPFAM" id="SSF52949">
    <property type="entry name" value="Macro domain-like"/>
    <property type="match status" value="1"/>
</dbReference>
<dbReference type="PROSITE" id="PS51154">
    <property type="entry name" value="MACRO"/>
    <property type="match status" value="1"/>
</dbReference>
<organism>
    <name type="scientific">Enterobacter cloacae subsp. cloacae (strain ATCC 13047 / DSM 30054 / NBRC 13535 / NCTC 10005 / WDCM 00083 / NCDC 279-56)</name>
    <dbReference type="NCBI Taxonomy" id="716541"/>
    <lineage>
        <taxon>Bacteria</taxon>
        <taxon>Pseudomonadati</taxon>
        <taxon>Pseudomonadota</taxon>
        <taxon>Gammaproteobacteria</taxon>
        <taxon>Enterobacterales</taxon>
        <taxon>Enterobacteriaceae</taxon>
        <taxon>Enterobacter</taxon>
        <taxon>Enterobacter cloacae complex</taxon>
    </lineage>
</organism>
<proteinExistence type="inferred from homology"/>
<comment type="function">
    <text evidence="1">Deacetylates O-acetyl-ADP ribose to yield ADP-ribose and free acetate. Down-regulates ribonuclease 3 (RNase III) activity. Acts by interacting directly with the region of the ribonuclease that is required for dimerization/activation.</text>
</comment>
<comment type="catalytic activity">
    <reaction evidence="1">
        <text>3''-O-acetyl-ADP-D-ribose + H2O = ADP-D-ribose + acetate + H(+)</text>
        <dbReference type="Rhea" id="RHEA:59244"/>
        <dbReference type="ChEBI" id="CHEBI:15377"/>
        <dbReference type="ChEBI" id="CHEBI:15378"/>
        <dbReference type="ChEBI" id="CHEBI:30089"/>
        <dbReference type="ChEBI" id="CHEBI:57967"/>
        <dbReference type="ChEBI" id="CHEBI:142723"/>
        <dbReference type="EC" id="3.1.1.106"/>
    </reaction>
</comment>
<comment type="catalytic activity">
    <reaction evidence="1">
        <text>2''-O-acetyl-ADP-D-ribose + H2O = ADP-D-ribose + acetate + H(+)</text>
        <dbReference type="Rhea" id="RHEA:57060"/>
        <dbReference type="ChEBI" id="CHEBI:15377"/>
        <dbReference type="ChEBI" id="CHEBI:15378"/>
        <dbReference type="ChEBI" id="CHEBI:30089"/>
        <dbReference type="ChEBI" id="CHEBI:57967"/>
        <dbReference type="ChEBI" id="CHEBI:83767"/>
        <dbReference type="EC" id="3.1.1.106"/>
    </reaction>
</comment>
<comment type="subunit">
    <text evidence="1">Homodimer. Interacts with RNase III.</text>
</comment>
<comment type="similarity">
    <text evidence="1">Belongs to the MacroD-type family. YmdB subfamily.</text>
</comment>
<reference key="1">
    <citation type="journal article" date="2010" name="J. Bacteriol.">
        <title>Complete genome sequence of Enterobacter cloacae subsp. cloacae type strain ATCC 13047.</title>
        <authorList>
            <person name="Ren Y."/>
            <person name="Ren Y."/>
            <person name="Zhou Z."/>
            <person name="Guo X."/>
            <person name="Li Y."/>
            <person name="Feng L."/>
            <person name="Wang L."/>
        </authorList>
    </citation>
    <scope>NUCLEOTIDE SEQUENCE [LARGE SCALE GENOMIC DNA]</scope>
    <source>
        <strain>ATCC 13047 / DSM 30054 / NBRC 13535 / NCTC 10005 / WDCM 00083 / NCDC 279-56</strain>
    </source>
</reference>